<sequence>MSEGESQTVLSSGSDPKVESSSSAPGLTSVSPPVTSTTSAASPEEEEESEDESEILEESPCGRWQKRREEVNQRNVPGIDSAYLAMDTEEGVEVVWNEVQFSERKNYKLQEEKVRAVFDNLIQLEHLNIVKFHKYWADIKENKARVIFITEYMSSGSLKQFLKKTKKNHKTMNEKAWKRWCTQILSALSYLHSCDPPIIHGNLTCDTIFIQHNGLIKIGSVAPDTINNHVKTCREEQKNLHFFAPEYGEVTNVTTAVDIYSFGMCALEMAVLEIQGNGESSYVPQEAISSAIQLLEDPLQREFIQKCLQSEPARRPTARELLFHPALFEVPSLKLLAAHCIVGHQHMIPENALEEITKNMDTSAVLAEIPAGPGREPVQTLYSQSPALELDKFLEDVRNGIYPLTAFGLPRPQQPQQEEVTSPVVPPSVKTPTPEPAEVETRKVVLMQCNIESVEEGVKHHLTLLLKLEDKLNRHLSCDLMPNENIPELAAELVQLGFISEADQSRLTSLLEETLNKFNFARSSTLNSAAVTVSS</sequence>
<reference evidence="6" key="1">
    <citation type="submission" date="2004-11" db="EMBL/GenBank/DDBJ databases">
        <authorList>
            <consortium name="The German cDNA consortium"/>
        </authorList>
    </citation>
    <scope>NUCLEOTIDE SEQUENCE [LARGE SCALE MRNA]</scope>
    <source>
        <tissue evidence="6">Brain cortex</tissue>
    </source>
</reference>
<proteinExistence type="evidence at transcript level"/>
<accession>Q5RBH9</accession>
<keyword id="KW-0007">Acetylation</keyword>
<keyword id="KW-0966">Cell projection</keyword>
<keyword id="KW-0963">Cytoplasm</keyword>
<keyword id="KW-0472">Membrane</keyword>
<keyword id="KW-0597">Phosphoprotein</keyword>
<keyword id="KW-1185">Reference proteome</keyword>
<feature type="initiator methionine" description="Removed" evidence="3">
    <location>
        <position position="1"/>
    </location>
</feature>
<feature type="chain" id="PRO_0000086452" description="Nuclear receptor-binding protein">
    <location>
        <begin position="2"/>
        <end position="535"/>
    </location>
</feature>
<feature type="domain" description="Protein kinase" evidence="4">
    <location>
        <begin position="68"/>
        <end position="327"/>
    </location>
</feature>
<feature type="region of interest" description="Disordered" evidence="5">
    <location>
        <begin position="1"/>
        <end position="70"/>
    </location>
</feature>
<feature type="region of interest" description="Disordered" evidence="5">
    <location>
        <begin position="409"/>
        <end position="437"/>
    </location>
</feature>
<feature type="compositionally biased region" description="Polar residues" evidence="5">
    <location>
        <begin position="1"/>
        <end position="26"/>
    </location>
</feature>
<feature type="compositionally biased region" description="Low complexity" evidence="5">
    <location>
        <begin position="27"/>
        <end position="42"/>
    </location>
</feature>
<feature type="compositionally biased region" description="Acidic residues" evidence="5">
    <location>
        <begin position="43"/>
        <end position="57"/>
    </location>
</feature>
<feature type="compositionally biased region" description="Low complexity" evidence="5">
    <location>
        <begin position="414"/>
        <end position="432"/>
    </location>
</feature>
<feature type="modified residue" description="N-acetylserine" evidence="3">
    <location>
        <position position="2"/>
    </location>
</feature>
<feature type="modified residue" description="Phosphoserine" evidence="3">
    <location>
        <position position="2"/>
    </location>
</feature>
<feature type="modified residue" description="Phosphothreonine" evidence="2">
    <location>
        <position position="431"/>
    </location>
</feature>
<feature type="modified residue" description="Phosphothreonine" evidence="3">
    <location>
        <position position="433"/>
    </location>
</feature>
<organism>
    <name type="scientific">Pongo abelii</name>
    <name type="common">Sumatran orangutan</name>
    <name type="synonym">Pongo pygmaeus abelii</name>
    <dbReference type="NCBI Taxonomy" id="9601"/>
    <lineage>
        <taxon>Eukaryota</taxon>
        <taxon>Metazoa</taxon>
        <taxon>Chordata</taxon>
        <taxon>Craniata</taxon>
        <taxon>Vertebrata</taxon>
        <taxon>Euteleostomi</taxon>
        <taxon>Mammalia</taxon>
        <taxon>Eutheria</taxon>
        <taxon>Euarchontoglires</taxon>
        <taxon>Primates</taxon>
        <taxon>Haplorrhini</taxon>
        <taxon>Catarrhini</taxon>
        <taxon>Hominidae</taxon>
        <taxon>Pongo</taxon>
    </lineage>
</organism>
<gene>
    <name type="primary">NRBP1</name>
</gene>
<evidence type="ECO:0000250" key="1"/>
<evidence type="ECO:0000250" key="2">
    <source>
        <dbReference type="UniProtKB" id="Q99J45"/>
    </source>
</evidence>
<evidence type="ECO:0000250" key="3">
    <source>
        <dbReference type="UniProtKB" id="Q9UHY1"/>
    </source>
</evidence>
<evidence type="ECO:0000255" key="4">
    <source>
        <dbReference type="PROSITE-ProRule" id="PRU00159"/>
    </source>
</evidence>
<evidence type="ECO:0000256" key="5">
    <source>
        <dbReference type="SAM" id="MobiDB-lite"/>
    </source>
</evidence>
<evidence type="ECO:0000312" key="6">
    <source>
        <dbReference type="EMBL" id="CAH90881.1"/>
    </source>
</evidence>
<dbReference type="EMBL" id="CR858669">
    <property type="protein sequence ID" value="CAH90881.1"/>
    <property type="molecule type" value="mRNA"/>
</dbReference>
<dbReference type="RefSeq" id="NP_001125503.1">
    <property type="nucleotide sequence ID" value="NM_001132031.1"/>
</dbReference>
<dbReference type="RefSeq" id="XP_009235713.1">
    <property type="nucleotide sequence ID" value="XM_009237438.3"/>
</dbReference>
<dbReference type="SMR" id="Q5RBH9"/>
<dbReference type="FunCoup" id="Q5RBH9">
    <property type="interactions" value="4006"/>
</dbReference>
<dbReference type="STRING" id="9601.ENSPPYP00000014013"/>
<dbReference type="Ensembl" id="ENSPPYT00000014580.2">
    <property type="protein sequence ID" value="ENSPPYP00000014013.2"/>
    <property type="gene ID" value="ENSPPYG00000012546.2"/>
</dbReference>
<dbReference type="GeneID" id="100172412"/>
<dbReference type="KEGG" id="pon:100172412"/>
<dbReference type="CTD" id="29959"/>
<dbReference type="eggNOG" id="KOG1266">
    <property type="taxonomic scope" value="Eukaryota"/>
</dbReference>
<dbReference type="GeneTree" id="ENSGT00940000155605"/>
<dbReference type="HOGENOM" id="CLU_024273_0_0_1"/>
<dbReference type="InParanoid" id="Q5RBH9"/>
<dbReference type="OrthoDB" id="1034557at2759"/>
<dbReference type="Proteomes" id="UP000001595">
    <property type="component" value="Chromosome 2A"/>
</dbReference>
<dbReference type="GO" id="GO:0005938">
    <property type="term" value="C:cell cortex"/>
    <property type="evidence" value="ECO:0007669"/>
    <property type="project" value="UniProtKB-SubCell"/>
</dbReference>
<dbReference type="GO" id="GO:0012505">
    <property type="term" value="C:endomembrane system"/>
    <property type="evidence" value="ECO:0000250"/>
    <property type="project" value="UniProtKB"/>
</dbReference>
<dbReference type="GO" id="GO:0030027">
    <property type="term" value="C:lamellipodium"/>
    <property type="evidence" value="ECO:0007669"/>
    <property type="project" value="UniProtKB-SubCell"/>
</dbReference>
<dbReference type="GO" id="GO:0016020">
    <property type="term" value="C:membrane"/>
    <property type="evidence" value="ECO:0007669"/>
    <property type="project" value="UniProtKB-KW"/>
</dbReference>
<dbReference type="GO" id="GO:0048471">
    <property type="term" value="C:perinuclear region of cytoplasm"/>
    <property type="evidence" value="ECO:0000250"/>
    <property type="project" value="UniProtKB"/>
</dbReference>
<dbReference type="GO" id="GO:0006888">
    <property type="term" value="P:endoplasmic reticulum to Golgi vesicle-mediated transport"/>
    <property type="evidence" value="ECO:0000250"/>
    <property type="project" value="UniProtKB"/>
</dbReference>
<dbReference type="CDD" id="cd14034">
    <property type="entry name" value="PK_NRBP1"/>
    <property type="match status" value="1"/>
</dbReference>
<dbReference type="FunFam" id="1.10.510.10:FF:000181">
    <property type="entry name" value="Nuclear receptor-binding protein 1"/>
    <property type="match status" value="1"/>
</dbReference>
<dbReference type="FunFam" id="3.30.200.20:FF:000098">
    <property type="entry name" value="Nuclear receptor-binding protein 1"/>
    <property type="match status" value="1"/>
</dbReference>
<dbReference type="Gene3D" id="3.30.200.20">
    <property type="entry name" value="Phosphorylase Kinase, domain 1"/>
    <property type="match status" value="1"/>
</dbReference>
<dbReference type="Gene3D" id="1.10.510.10">
    <property type="entry name" value="Transferase(Phosphotransferase) domain 1"/>
    <property type="match status" value="1"/>
</dbReference>
<dbReference type="InterPro" id="IPR011009">
    <property type="entry name" value="Kinase-like_dom_sf"/>
</dbReference>
<dbReference type="InterPro" id="IPR000719">
    <property type="entry name" value="Prot_kinase_dom"/>
</dbReference>
<dbReference type="InterPro" id="IPR050588">
    <property type="entry name" value="WNK_Ser-Thr_kinase"/>
</dbReference>
<dbReference type="PANTHER" id="PTHR13902">
    <property type="entry name" value="SERINE/THREONINE-PROTEIN KINASE WNK WITH NO LYSINE -RELATED"/>
    <property type="match status" value="1"/>
</dbReference>
<dbReference type="Pfam" id="PF00069">
    <property type="entry name" value="Pkinase"/>
    <property type="match status" value="1"/>
</dbReference>
<dbReference type="SUPFAM" id="SSF56112">
    <property type="entry name" value="Protein kinase-like (PK-like)"/>
    <property type="match status" value="1"/>
</dbReference>
<dbReference type="PROSITE" id="PS50011">
    <property type="entry name" value="PROTEIN_KINASE_DOM"/>
    <property type="match status" value="1"/>
</dbReference>
<protein>
    <recommendedName>
        <fullName>Nuclear receptor-binding protein</fullName>
    </recommendedName>
</protein>
<comment type="function">
    <text evidence="2 3">Required for embryonic development (By similarity). Plays a role in intestinal epithelial cell fate and proliferation, thereby involved in the architectural development of the intestine potentially via the regulation of Wnt-responsive genes (By similarity). May play a role in subcellular trafficking between the endoplasmic reticulum and Golgi apparatus through interactions with the Rho-type GTPases (By similarity).</text>
</comment>
<comment type="subunit">
    <text evidence="2 3">Homodimer (By similarity). Binds to MLF1, recruiting a serine kinase which phosphorylates both itself and MLF1 (By similarity). Phosphorylated MLF1 binds to YWHAZ and is retained in the cytoplasm (By similarity). Interacts with ELOC/TCEB1, ELOB/TCEB2, TSC22D2 and TSC22D4 (By similarity). Interacts with the Elongin BC E3 ubiquitin ligase complex via its interaction with ELOB/TCEB2 and ELOC/TCEB1 (By similarity). Interacts with SALL4 (By similarity).</text>
</comment>
<comment type="subcellular location">
    <subcellularLocation>
        <location evidence="1">Cytoplasm</location>
        <location evidence="1">Cell cortex</location>
    </subcellularLocation>
    <subcellularLocation>
        <location evidence="1">Endomembrane system</location>
    </subcellularLocation>
    <subcellularLocation>
        <location evidence="1">Cell projection</location>
        <location evidence="1">Lamellipodium</location>
    </subcellularLocation>
    <text evidence="1">Colocalizes with activated RAC3 to endomembranes and at the cell periphery in lamellipodia.</text>
</comment>
<comment type="domain">
    <text evidence="4">The protein kinase domain is predicted to be catalytically inactive.</text>
</comment>
<comment type="similarity">
    <text evidence="4">Belongs to the protein kinase superfamily. Ser/Thr protein kinase family.</text>
</comment>
<name>NRBP_PONAB</name>